<sequence length="214" mass="25290">MRVRYKPWAEDYLKDHPELVDMEGQHAGKMTEWFDKTQPIHIEIGSGMGQFITTLAAQNPHINYISMEREKSIVYKVLDKVKEMGLTNLKIICNDAIELNEYFKDGEVSRIYLNFSDPWPKNRHAKRRLTYHTFLALYQQILNDEGDLHFKTDNRGLFAYSLESMSQFGMYFTKINLNLHQEDDGSNILTEYEKKFSDKGSRIYRMEAKFHSQK</sequence>
<organism>
    <name type="scientific">Staphylococcus aureus (strain JH9)</name>
    <dbReference type="NCBI Taxonomy" id="359786"/>
    <lineage>
        <taxon>Bacteria</taxon>
        <taxon>Bacillati</taxon>
        <taxon>Bacillota</taxon>
        <taxon>Bacilli</taxon>
        <taxon>Bacillales</taxon>
        <taxon>Staphylococcaceae</taxon>
        <taxon>Staphylococcus</taxon>
    </lineage>
</organism>
<name>TRMB_STAA9</name>
<keyword id="KW-0489">Methyltransferase</keyword>
<keyword id="KW-0949">S-adenosyl-L-methionine</keyword>
<keyword id="KW-0808">Transferase</keyword>
<keyword id="KW-0819">tRNA processing</keyword>
<feature type="chain" id="PRO_1000136363" description="tRNA (guanine-N(7)-)-methyltransferase">
    <location>
        <begin position="1"/>
        <end position="214"/>
    </location>
</feature>
<feature type="active site" evidence="1">
    <location>
        <position position="117"/>
    </location>
</feature>
<feature type="binding site" evidence="2">
    <location>
        <position position="43"/>
    </location>
    <ligand>
        <name>S-adenosyl-L-methionine</name>
        <dbReference type="ChEBI" id="CHEBI:59789"/>
    </ligand>
</feature>
<feature type="binding site" evidence="2">
    <location>
        <position position="68"/>
    </location>
    <ligand>
        <name>S-adenosyl-L-methionine</name>
        <dbReference type="ChEBI" id="CHEBI:59789"/>
    </ligand>
</feature>
<feature type="binding site" evidence="2">
    <location>
        <position position="95"/>
    </location>
    <ligand>
        <name>S-adenosyl-L-methionine</name>
        <dbReference type="ChEBI" id="CHEBI:59789"/>
    </ligand>
</feature>
<feature type="binding site" evidence="2">
    <location>
        <position position="117"/>
    </location>
    <ligand>
        <name>S-adenosyl-L-methionine</name>
        <dbReference type="ChEBI" id="CHEBI:59789"/>
    </ligand>
</feature>
<feature type="binding site" evidence="2">
    <location>
        <position position="121"/>
    </location>
    <ligand>
        <name>substrate</name>
    </ligand>
</feature>
<feature type="binding site" evidence="2">
    <location>
        <position position="153"/>
    </location>
    <ligand>
        <name>substrate</name>
    </ligand>
</feature>
<feature type="binding site" evidence="2">
    <location>
        <begin position="190"/>
        <end position="193"/>
    </location>
    <ligand>
        <name>substrate</name>
    </ligand>
</feature>
<protein>
    <recommendedName>
        <fullName evidence="2">tRNA (guanine-N(7)-)-methyltransferase</fullName>
        <ecNumber evidence="2">2.1.1.33</ecNumber>
    </recommendedName>
    <alternativeName>
        <fullName evidence="2">tRNA (guanine(46)-N(7))-methyltransferase</fullName>
    </alternativeName>
    <alternativeName>
        <fullName evidence="2">tRNA(m7G46)-methyltransferase</fullName>
    </alternativeName>
</protein>
<gene>
    <name evidence="2" type="primary">trmB</name>
    <name type="ordered locus">SaurJH9_1803</name>
</gene>
<proteinExistence type="inferred from homology"/>
<accession>A5ITS0</accession>
<dbReference type="EC" id="2.1.1.33" evidence="2"/>
<dbReference type="EMBL" id="CP000703">
    <property type="protein sequence ID" value="ABQ49593.1"/>
    <property type="molecule type" value="Genomic_DNA"/>
</dbReference>
<dbReference type="RefSeq" id="WP_001266162.1">
    <property type="nucleotide sequence ID" value="NC_009487.1"/>
</dbReference>
<dbReference type="SMR" id="A5ITS0"/>
<dbReference type="KEGG" id="saj:SaurJH9_1803"/>
<dbReference type="HOGENOM" id="CLU_050910_2_1_9"/>
<dbReference type="UniPathway" id="UPA00989"/>
<dbReference type="GO" id="GO:0043527">
    <property type="term" value="C:tRNA methyltransferase complex"/>
    <property type="evidence" value="ECO:0007669"/>
    <property type="project" value="TreeGrafter"/>
</dbReference>
<dbReference type="GO" id="GO:0008176">
    <property type="term" value="F:tRNA (guanine(46)-N7)-methyltransferase activity"/>
    <property type="evidence" value="ECO:0007669"/>
    <property type="project" value="UniProtKB-UniRule"/>
</dbReference>
<dbReference type="CDD" id="cd02440">
    <property type="entry name" value="AdoMet_MTases"/>
    <property type="match status" value="1"/>
</dbReference>
<dbReference type="FunFam" id="3.40.50.150:FF:000035">
    <property type="entry name" value="tRNA (guanine-N(7)-)-methyltransferase"/>
    <property type="match status" value="1"/>
</dbReference>
<dbReference type="Gene3D" id="3.40.50.150">
    <property type="entry name" value="Vaccinia Virus protein VP39"/>
    <property type="match status" value="1"/>
</dbReference>
<dbReference type="HAMAP" id="MF_01057">
    <property type="entry name" value="tRNA_methyltr_TrmB"/>
    <property type="match status" value="1"/>
</dbReference>
<dbReference type="InterPro" id="IPR029063">
    <property type="entry name" value="SAM-dependent_MTases_sf"/>
</dbReference>
<dbReference type="InterPro" id="IPR003358">
    <property type="entry name" value="tRNA_(Gua-N-7)_MeTrfase_Trmb"/>
</dbReference>
<dbReference type="InterPro" id="IPR055361">
    <property type="entry name" value="tRNA_methyltr_TrmB_bact"/>
</dbReference>
<dbReference type="NCBIfam" id="NF001080">
    <property type="entry name" value="PRK00121.2-2"/>
    <property type="match status" value="1"/>
</dbReference>
<dbReference type="NCBIfam" id="TIGR00091">
    <property type="entry name" value="tRNA (guanosine(46)-N7)-methyltransferase TrmB"/>
    <property type="match status" value="1"/>
</dbReference>
<dbReference type="PANTHER" id="PTHR23417">
    <property type="entry name" value="3-DEOXY-D-MANNO-OCTULOSONIC-ACID TRANSFERASE/TRNA GUANINE-N 7 - -METHYLTRANSFERASE"/>
    <property type="match status" value="1"/>
</dbReference>
<dbReference type="PANTHER" id="PTHR23417:SF14">
    <property type="entry name" value="PENTACOTRIPEPTIDE-REPEAT REGION OF PRORP DOMAIN-CONTAINING PROTEIN"/>
    <property type="match status" value="1"/>
</dbReference>
<dbReference type="Pfam" id="PF02390">
    <property type="entry name" value="Methyltransf_4"/>
    <property type="match status" value="1"/>
</dbReference>
<dbReference type="SUPFAM" id="SSF53335">
    <property type="entry name" value="S-adenosyl-L-methionine-dependent methyltransferases"/>
    <property type="match status" value="1"/>
</dbReference>
<dbReference type="PROSITE" id="PS51625">
    <property type="entry name" value="SAM_MT_TRMB"/>
    <property type="match status" value="1"/>
</dbReference>
<evidence type="ECO:0000250" key="1"/>
<evidence type="ECO:0000255" key="2">
    <source>
        <dbReference type="HAMAP-Rule" id="MF_01057"/>
    </source>
</evidence>
<comment type="function">
    <text evidence="2">Catalyzes the formation of N(7)-methylguanine at position 46 (m7G46) in tRNA.</text>
</comment>
<comment type="catalytic activity">
    <reaction evidence="2">
        <text>guanosine(46) in tRNA + S-adenosyl-L-methionine = N(7)-methylguanosine(46) in tRNA + S-adenosyl-L-homocysteine</text>
        <dbReference type="Rhea" id="RHEA:42708"/>
        <dbReference type="Rhea" id="RHEA-COMP:10188"/>
        <dbReference type="Rhea" id="RHEA-COMP:10189"/>
        <dbReference type="ChEBI" id="CHEBI:57856"/>
        <dbReference type="ChEBI" id="CHEBI:59789"/>
        <dbReference type="ChEBI" id="CHEBI:74269"/>
        <dbReference type="ChEBI" id="CHEBI:74480"/>
        <dbReference type="EC" id="2.1.1.33"/>
    </reaction>
</comment>
<comment type="pathway">
    <text evidence="2">tRNA modification; N(7)-methylguanine-tRNA biosynthesis.</text>
</comment>
<comment type="similarity">
    <text evidence="2">Belongs to the class I-like SAM-binding methyltransferase superfamily. TrmB family.</text>
</comment>
<reference key="1">
    <citation type="submission" date="2007-05" db="EMBL/GenBank/DDBJ databases">
        <title>Complete sequence of chromosome of Staphylococcus aureus subsp. aureus JH9.</title>
        <authorList>
            <consortium name="US DOE Joint Genome Institute"/>
            <person name="Copeland A."/>
            <person name="Lucas S."/>
            <person name="Lapidus A."/>
            <person name="Barry K."/>
            <person name="Detter J.C."/>
            <person name="Glavina del Rio T."/>
            <person name="Hammon N."/>
            <person name="Israni S."/>
            <person name="Pitluck S."/>
            <person name="Chain P."/>
            <person name="Malfatti S."/>
            <person name="Shin M."/>
            <person name="Vergez L."/>
            <person name="Schmutz J."/>
            <person name="Larimer F."/>
            <person name="Land M."/>
            <person name="Hauser L."/>
            <person name="Kyrpides N."/>
            <person name="Kim E."/>
            <person name="Tomasz A."/>
            <person name="Richardson P."/>
        </authorList>
    </citation>
    <scope>NUCLEOTIDE SEQUENCE [LARGE SCALE GENOMIC DNA]</scope>
    <source>
        <strain>JH9</strain>
    </source>
</reference>